<dbReference type="EMBL" id="D78189">
    <property type="protein sequence ID" value="BAA11260.1"/>
    <property type="molecule type" value="Genomic_DNA"/>
</dbReference>
<dbReference type="EMBL" id="AJ002571">
    <property type="protein sequence ID" value="CAA05586.1"/>
    <property type="molecule type" value="Genomic_DNA"/>
</dbReference>
<dbReference type="EMBL" id="AL009126">
    <property type="protein sequence ID" value="CAB13164.1"/>
    <property type="molecule type" value="Genomic_DNA"/>
</dbReference>
<dbReference type="PIR" id="G69856">
    <property type="entry name" value="G69856"/>
</dbReference>
<dbReference type="RefSeq" id="NP_389190.1">
    <property type="nucleotide sequence ID" value="NC_000964.3"/>
</dbReference>
<dbReference type="RefSeq" id="WP_003245783.1">
    <property type="nucleotide sequence ID" value="NZ_OZ025638.1"/>
</dbReference>
<dbReference type="SMR" id="P49854"/>
<dbReference type="FunCoup" id="P49854">
    <property type="interactions" value="9"/>
</dbReference>
<dbReference type="STRING" id="224308.BSU13070"/>
<dbReference type="PaxDb" id="224308-BSU13070"/>
<dbReference type="EnsemblBacteria" id="CAB13164">
    <property type="protein sequence ID" value="CAB13164"/>
    <property type="gene ID" value="BSU_13070"/>
</dbReference>
<dbReference type="GeneID" id="937079"/>
<dbReference type="KEGG" id="bsu:BSU13070"/>
<dbReference type="PATRIC" id="fig|224308.179.peg.1419"/>
<dbReference type="eggNOG" id="COG2318">
    <property type="taxonomic scope" value="Bacteria"/>
</dbReference>
<dbReference type="InParanoid" id="P49854"/>
<dbReference type="OrthoDB" id="2932601at2"/>
<dbReference type="BioCyc" id="BSUB:BSU13070-MONOMER"/>
<dbReference type="Proteomes" id="UP000001570">
    <property type="component" value="Chromosome"/>
</dbReference>
<dbReference type="Gene3D" id="1.20.120.450">
    <property type="entry name" value="dinb family like domain"/>
    <property type="match status" value="1"/>
</dbReference>
<dbReference type="InterPro" id="IPR024775">
    <property type="entry name" value="DinB-like"/>
</dbReference>
<dbReference type="InterPro" id="IPR034660">
    <property type="entry name" value="DinB/YfiT-like"/>
</dbReference>
<dbReference type="Pfam" id="PF12867">
    <property type="entry name" value="DinB_2"/>
    <property type="match status" value="1"/>
</dbReference>
<dbReference type="SUPFAM" id="SSF109854">
    <property type="entry name" value="DinB/YfiT-like putative metalloenzymes"/>
    <property type="match status" value="1"/>
</dbReference>
<organism>
    <name type="scientific">Bacillus subtilis (strain 168)</name>
    <dbReference type="NCBI Taxonomy" id="224308"/>
    <lineage>
        <taxon>Bacteria</taxon>
        <taxon>Bacillati</taxon>
        <taxon>Bacillota</taxon>
        <taxon>Bacilli</taxon>
        <taxon>Bacillales</taxon>
        <taxon>Bacillaceae</taxon>
        <taxon>Bacillus</taxon>
    </lineage>
</organism>
<feature type="chain" id="PRO_0000049603" description="Uncharacterized protein YkkA">
    <location>
        <begin position="1"/>
        <end position="175"/>
    </location>
</feature>
<sequence length="175" mass="20494">MKDLSIRNDMAPTVSLLYSAVEENSLRLASIVSHMTHSELYYKGRCQTKNSTAQLLHHITNVDIRWVWRIKENRIPDHIEQAYGPMTDESGRLPEPVNQPDLDELLKRHQHVVEKLKSVCFTLTENALNQPLSFEGDTATIRWGIWHMADHNRYHQAHIEALKKEWKQDVAKYER</sequence>
<accession>P49854</accession>
<protein>
    <recommendedName>
        <fullName>Uncharacterized protein YkkA</fullName>
    </recommendedName>
</protein>
<proteinExistence type="predicted"/>
<keyword id="KW-1185">Reference proteome</keyword>
<reference key="1">
    <citation type="journal article" date="1996" name="J. Bacteriol.">
        <title>Oxygen-controlled regulation of the flavohemoglobin gene in Bacillus subtilis.</title>
        <authorList>
            <person name="Lacelle M."/>
            <person name="Kumano M."/>
            <person name="Kurita K."/>
            <person name="Yamane K."/>
            <person name="Zuber P."/>
            <person name="Nakano M.M."/>
        </authorList>
    </citation>
    <scope>NUCLEOTIDE SEQUENCE [GENOMIC DNA]</scope>
    <source>
        <strain>168</strain>
    </source>
</reference>
<reference key="2">
    <citation type="submission" date="1997-11" db="EMBL/GenBank/DDBJ databases">
        <title>Sequence of the Bacillus subtilis genome between xlyA and ykoR.</title>
        <authorList>
            <person name="Devine K.M."/>
        </authorList>
    </citation>
    <scope>NUCLEOTIDE SEQUENCE [GENOMIC DNA]</scope>
    <source>
        <strain>168</strain>
    </source>
</reference>
<reference key="3">
    <citation type="journal article" date="1997" name="Nature">
        <title>The complete genome sequence of the Gram-positive bacterium Bacillus subtilis.</title>
        <authorList>
            <person name="Kunst F."/>
            <person name="Ogasawara N."/>
            <person name="Moszer I."/>
            <person name="Albertini A.M."/>
            <person name="Alloni G."/>
            <person name="Azevedo V."/>
            <person name="Bertero M.G."/>
            <person name="Bessieres P."/>
            <person name="Bolotin A."/>
            <person name="Borchert S."/>
            <person name="Borriss R."/>
            <person name="Boursier L."/>
            <person name="Brans A."/>
            <person name="Braun M."/>
            <person name="Brignell S.C."/>
            <person name="Bron S."/>
            <person name="Brouillet S."/>
            <person name="Bruschi C.V."/>
            <person name="Caldwell B."/>
            <person name="Capuano V."/>
            <person name="Carter N.M."/>
            <person name="Choi S.-K."/>
            <person name="Codani J.-J."/>
            <person name="Connerton I.F."/>
            <person name="Cummings N.J."/>
            <person name="Daniel R.A."/>
            <person name="Denizot F."/>
            <person name="Devine K.M."/>
            <person name="Duesterhoeft A."/>
            <person name="Ehrlich S.D."/>
            <person name="Emmerson P.T."/>
            <person name="Entian K.-D."/>
            <person name="Errington J."/>
            <person name="Fabret C."/>
            <person name="Ferrari E."/>
            <person name="Foulger D."/>
            <person name="Fritz C."/>
            <person name="Fujita M."/>
            <person name="Fujita Y."/>
            <person name="Fuma S."/>
            <person name="Galizzi A."/>
            <person name="Galleron N."/>
            <person name="Ghim S.-Y."/>
            <person name="Glaser P."/>
            <person name="Goffeau A."/>
            <person name="Golightly E.J."/>
            <person name="Grandi G."/>
            <person name="Guiseppi G."/>
            <person name="Guy B.J."/>
            <person name="Haga K."/>
            <person name="Haiech J."/>
            <person name="Harwood C.R."/>
            <person name="Henaut A."/>
            <person name="Hilbert H."/>
            <person name="Holsappel S."/>
            <person name="Hosono S."/>
            <person name="Hullo M.-F."/>
            <person name="Itaya M."/>
            <person name="Jones L.-M."/>
            <person name="Joris B."/>
            <person name="Karamata D."/>
            <person name="Kasahara Y."/>
            <person name="Klaerr-Blanchard M."/>
            <person name="Klein C."/>
            <person name="Kobayashi Y."/>
            <person name="Koetter P."/>
            <person name="Koningstein G."/>
            <person name="Krogh S."/>
            <person name="Kumano M."/>
            <person name="Kurita K."/>
            <person name="Lapidus A."/>
            <person name="Lardinois S."/>
            <person name="Lauber J."/>
            <person name="Lazarevic V."/>
            <person name="Lee S.-M."/>
            <person name="Levine A."/>
            <person name="Liu H."/>
            <person name="Masuda S."/>
            <person name="Mauel C."/>
            <person name="Medigue C."/>
            <person name="Medina N."/>
            <person name="Mellado R.P."/>
            <person name="Mizuno M."/>
            <person name="Moestl D."/>
            <person name="Nakai S."/>
            <person name="Noback M."/>
            <person name="Noone D."/>
            <person name="O'Reilly M."/>
            <person name="Ogawa K."/>
            <person name="Ogiwara A."/>
            <person name="Oudega B."/>
            <person name="Park S.-H."/>
            <person name="Parro V."/>
            <person name="Pohl T.M."/>
            <person name="Portetelle D."/>
            <person name="Porwollik S."/>
            <person name="Prescott A.M."/>
            <person name="Presecan E."/>
            <person name="Pujic P."/>
            <person name="Purnelle B."/>
            <person name="Rapoport G."/>
            <person name="Rey M."/>
            <person name="Reynolds S."/>
            <person name="Rieger M."/>
            <person name="Rivolta C."/>
            <person name="Rocha E."/>
            <person name="Roche B."/>
            <person name="Rose M."/>
            <person name="Sadaie Y."/>
            <person name="Sato T."/>
            <person name="Scanlan E."/>
            <person name="Schleich S."/>
            <person name="Schroeter R."/>
            <person name="Scoffone F."/>
            <person name="Sekiguchi J."/>
            <person name="Sekowska A."/>
            <person name="Seror S.J."/>
            <person name="Serror P."/>
            <person name="Shin B.-S."/>
            <person name="Soldo B."/>
            <person name="Sorokin A."/>
            <person name="Tacconi E."/>
            <person name="Takagi T."/>
            <person name="Takahashi H."/>
            <person name="Takemaru K."/>
            <person name="Takeuchi M."/>
            <person name="Tamakoshi A."/>
            <person name="Tanaka T."/>
            <person name="Terpstra P."/>
            <person name="Tognoni A."/>
            <person name="Tosato V."/>
            <person name="Uchiyama S."/>
            <person name="Vandenbol M."/>
            <person name="Vannier F."/>
            <person name="Vassarotti A."/>
            <person name="Viari A."/>
            <person name="Wambutt R."/>
            <person name="Wedler E."/>
            <person name="Wedler H."/>
            <person name="Weitzenegger T."/>
            <person name="Winters P."/>
            <person name="Wipat A."/>
            <person name="Yamamoto H."/>
            <person name="Yamane K."/>
            <person name="Yasumoto K."/>
            <person name="Yata K."/>
            <person name="Yoshida K."/>
            <person name="Yoshikawa H.-F."/>
            <person name="Zumstein E."/>
            <person name="Yoshikawa H."/>
            <person name="Danchin A."/>
        </authorList>
    </citation>
    <scope>NUCLEOTIDE SEQUENCE [LARGE SCALE GENOMIC DNA]</scope>
    <source>
        <strain>168</strain>
    </source>
</reference>
<gene>
    <name type="primary">ykkA</name>
    <name type="ordered locus">BSU13070</name>
</gene>
<name>YKKA_BACSU</name>